<sequence>METIYDFVVETNKGVTYKLDAYKGDVMLIVNTASECGFTSQFEGLQSLYEKYKDQGFVILGFPCNQFGGQEPGSGEEAAQNCKLNYGVTFPMHQKIDVKGEHQLPLFRYLTAAQHGFFNEKIKWNFTKFLVDREGNVVKRFAPQKKPVQIEREIEKLL</sequence>
<dbReference type="EMBL" id="BA000033">
    <property type="protein sequence ID" value="BAB95053.1"/>
    <property type="molecule type" value="Genomic_DNA"/>
</dbReference>
<dbReference type="RefSeq" id="WP_000448078.1">
    <property type="nucleotide sequence ID" value="NC_003923.1"/>
</dbReference>
<dbReference type="SMR" id="P64291"/>
<dbReference type="KEGG" id="sam:MW1188"/>
<dbReference type="HOGENOM" id="CLU_029507_2_2_9"/>
<dbReference type="GO" id="GO:0004601">
    <property type="term" value="F:peroxidase activity"/>
    <property type="evidence" value="ECO:0007669"/>
    <property type="project" value="UniProtKB-KW"/>
</dbReference>
<dbReference type="GO" id="GO:0034599">
    <property type="term" value="P:cellular response to oxidative stress"/>
    <property type="evidence" value="ECO:0007669"/>
    <property type="project" value="TreeGrafter"/>
</dbReference>
<dbReference type="CDD" id="cd00340">
    <property type="entry name" value="GSH_Peroxidase"/>
    <property type="match status" value="1"/>
</dbReference>
<dbReference type="FunFam" id="3.40.30.10:FF:000010">
    <property type="entry name" value="Glutathione peroxidase"/>
    <property type="match status" value="1"/>
</dbReference>
<dbReference type="Gene3D" id="3.40.30.10">
    <property type="entry name" value="Glutaredoxin"/>
    <property type="match status" value="1"/>
</dbReference>
<dbReference type="InterPro" id="IPR000889">
    <property type="entry name" value="Glutathione_peroxidase"/>
</dbReference>
<dbReference type="InterPro" id="IPR029760">
    <property type="entry name" value="GPX_CS"/>
</dbReference>
<dbReference type="InterPro" id="IPR036249">
    <property type="entry name" value="Thioredoxin-like_sf"/>
</dbReference>
<dbReference type="PANTHER" id="PTHR11592">
    <property type="entry name" value="GLUTATHIONE PEROXIDASE"/>
    <property type="match status" value="1"/>
</dbReference>
<dbReference type="PANTHER" id="PTHR11592:SF78">
    <property type="entry name" value="GLUTATHIONE PEROXIDASE"/>
    <property type="match status" value="1"/>
</dbReference>
<dbReference type="Pfam" id="PF00255">
    <property type="entry name" value="GSHPx"/>
    <property type="match status" value="1"/>
</dbReference>
<dbReference type="PIRSF" id="PIRSF000303">
    <property type="entry name" value="Glutathion_perox"/>
    <property type="match status" value="1"/>
</dbReference>
<dbReference type="PRINTS" id="PR01011">
    <property type="entry name" value="GLUTPROXDASE"/>
</dbReference>
<dbReference type="SUPFAM" id="SSF52833">
    <property type="entry name" value="Thioredoxin-like"/>
    <property type="match status" value="1"/>
</dbReference>
<dbReference type="PROSITE" id="PS00763">
    <property type="entry name" value="GLUTATHIONE_PEROXID_2"/>
    <property type="match status" value="1"/>
</dbReference>
<dbReference type="PROSITE" id="PS51355">
    <property type="entry name" value="GLUTATHIONE_PEROXID_3"/>
    <property type="match status" value="1"/>
</dbReference>
<protein>
    <recommendedName>
        <fullName>Glutathione peroxidase homolog BsaA</fullName>
    </recommendedName>
</protein>
<feature type="chain" id="PRO_0000066655" description="Glutathione peroxidase homolog BsaA">
    <location>
        <begin position="1"/>
        <end position="158"/>
    </location>
</feature>
<feature type="active site" evidence="1">
    <location>
        <position position="36"/>
    </location>
</feature>
<proteinExistence type="inferred from homology"/>
<accession>P64291</accession>
<accession>Q99UG8</accession>
<gene>
    <name type="primary">bsaA</name>
    <name type="ordered locus">MW1188</name>
</gene>
<evidence type="ECO:0000250" key="1"/>
<evidence type="ECO:0000305" key="2"/>
<keyword id="KW-0560">Oxidoreductase</keyword>
<keyword id="KW-0575">Peroxidase</keyword>
<name>BSAA_STAAW</name>
<comment type="similarity">
    <text evidence="2">Belongs to the glutathione peroxidase family.</text>
</comment>
<reference key="1">
    <citation type="journal article" date="2002" name="Lancet">
        <title>Genome and virulence determinants of high virulence community-acquired MRSA.</title>
        <authorList>
            <person name="Baba T."/>
            <person name="Takeuchi F."/>
            <person name="Kuroda M."/>
            <person name="Yuzawa H."/>
            <person name="Aoki K."/>
            <person name="Oguchi A."/>
            <person name="Nagai Y."/>
            <person name="Iwama N."/>
            <person name="Asano K."/>
            <person name="Naimi T."/>
            <person name="Kuroda H."/>
            <person name="Cui L."/>
            <person name="Yamamoto K."/>
            <person name="Hiramatsu K."/>
        </authorList>
    </citation>
    <scope>NUCLEOTIDE SEQUENCE [LARGE SCALE GENOMIC DNA]</scope>
    <source>
        <strain>MW2</strain>
    </source>
</reference>
<organism>
    <name type="scientific">Staphylococcus aureus (strain MW2)</name>
    <dbReference type="NCBI Taxonomy" id="196620"/>
    <lineage>
        <taxon>Bacteria</taxon>
        <taxon>Bacillati</taxon>
        <taxon>Bacillota</taxon>
        <taxon>Bacilli</taxon>
        <taxon>Bacillales</taxon>
        <taxon>Staphylococcaceae</taxon>
        <taxon>Staphylococcus</taxon>
    </lineage>
</organism>